<sequence>MKALVLAGGTGTRLRPITHTSAKQLVPVANKPVLFYGLEAIRAAGIIDVGIVVGDTADEIVAAVGDGSRFGLKVSYIPQSKPLGLAHCVLISRDFLGEDDFIMYLGDNFVVGVVEDSVREFRAARPDAHLMLTRVPEPRSFGVAELSDSGQVLGLEEKPAHPKSDLALVGVYLFSPAIHEAVAAITPSWRGELEITDAVQWLIDAGRDVRSTVISGYWKDTGNVTDMLEVNRLVLETTEPRCDGLVDERSDLIGRVLVEEGAEVRNSRVMGPTVIGAGTRVTNSYVGPFTSLAEDCVVEDSEVEFSIVLRGASISGVRRIEASLIGRHVQVTSAPEVPHANRLVLGDHSRAQISS</sequence>
<gene>
    <name type="primary">strD</name>
</gene>
<feature type="chain" id="PRO_0000208005" description="Glucose-1-phosphate thymidylyltransferase">
    <location>
        <begin position="1"/>
        <end position="355"/>
    </location>
</feature>
<feature type="binding site" evidence="1">
    <location>
        <position position="107"/>
    </location>
    <ligand>
        <name>Mg(2+)</name>
        <dbReference type="ChEBI" id="CHEBI:18420"/>
    </ligand>
</feature>
<feature type="binding site" evidence="1">
    <location>
        <position position="220"/>
    </location>
    <ligand>
        <name>Mg(2+)</name>
        <dbReference type="ChEBI" id="CHEBI:18420"/>
    </ligand>
</feature>
<comment type="function">
    <text evidence="1 3">Involved in the biosynthesis of the streptose moiety of streptomycin (Probable). Catalyzes the formation of dTDP-glucose, from dTTP and glucose 1-phosphate, as well as its pyrophosphorolysis (By similarity).</text>
</comment>
<comment type="catalytic activity">
    <reaction evidence="1">
        <text>dTTP + alpha-D-glucose 1-phosphate + H(+) = dTDP-alpha-D-glucose + diphosphate</text>
        <dbReference type="Rhea" id="RHEA:15225"/>
        <dbReference type="ChEBI" id="CHEBI:15378"/>
        <dbReference type="ChEBI" id="CHEBI:33019"/>
        <dbReference type="ChEBI" id="CHEBI:37568"/>
        <dbReference type="ChEBI" id="CHEBI:57477"/>
        <dbReference type="ChEBI" id="CHEBI:58601"/>
        <dbReference type="EC" id="2.7.7.24"/>
    </reaction>
</comment>
<comment type="cofactor">
    <cofactor evidence="1">
        <name>Mg(2+)</name>
        <dbReference type="ChEBI" id="CHEBI:18420"/>
    </cofactor>
    <text evidence="1">Binds 1 Mg(2+) ion per subunit.</text>
</comment>
<comment type="pathway">
    <text evidence="3">Antibiotic biosynthesis; streptomycin biosynthesis.</text>
</comment>
<comment type="similarity">
    <text evidence="2">Belongs to the glucose-1-phosphate thymidylyltransferase family.</text>
</comment>
<proteinExistence type="inferred from homology"/>
<protein>
    <recommendedName>
        <fullName>Glucose-1-phosphate thymidylyltransferase</fullName>
        <ecNumber evidence="1">2.7.7.24</ecNumber>
    </recommendedName>
    <alternativeName>
        <fullName>Sugar-nucleotidylation enzyme</fullName>
    </alternativeName>
    <alternativeName>
        <fullName>dTDP-glucose pyrophosphorylase</fullName>
    </alternativeName>
    <alternativeName>
        <fullName>dTDP-glucose synthase</fullName>
    </alternativeName>
</protein>
<organism>
    <name type="scientific">Streptomyces griseus</name>
    <dbReference type="NCBI Taxonomy" id="1911"/>
    <lineage>
        <taxon>Bacteria</taxon>
        <taxon>Bacillati</taxon>
        <taxon>Actinomycetota</taxon>
        <taxon>Actinomycetes</taxon>
        <taxon>Kitasatosporales</taxon>
        <taxon>Streptomycetaceae</taxon>
        <taxon>Streptomyces</taxon>
    </lineage>
</organism>
<evidence type="ECO:0000250" key="1">
    <source>
        <dbReference type="UniProtKB" id="P61887"/>
    </source>
</evidence>
<evidence type="ECO:0000305" key="2"/>
<evidence type="ECO:0000305" key="3">
    <source>
    </source>
</evidence>
<name>RMLA_STRGR</name>
<keyword id="KW-0045">Antibiotic biosynthesis</keyword>
<keyword id="KW-0460">Magnesium</keyword>
<keyword id="KW-0479">Metal-binding</keyword>
<keyword id="KW-0548">Nucleotidyltransferase</keyword>
<keyword id="KW-0759">Streptomycin biosynthesis</keyword>
<keyword id="KW-0808">Transferase</keyword>
<dbReference type="EC" id="2.7.7.24" evidence="1"/>
<dbReference type="EMBL" id="Y00459">
    <property type="protein sequence ID" value="CAA68514.1"/>
    <property type="molecule type" value="Genomic_DNA"/>
</dbReference>
<dbReference type="PIR" id="A26984">
    <property type="entry name" value="A26984"/>
</dbReference>
<dbReference type="SMR" id="P08075"/>
<dbReference type="UniPathway" id="UPA00066"/>
<dbReference type="GO" id="GO:0008879">
    <property type="term" value="F:glucose-1-phosphate thymidylyltransferase activity"/>
    <property type="evidence" value="ECO:0007669"/>
    <property type="project" value="UniProtKB-EC"/>
</dbReference>
<dbReference type="GO" id="GO:0046872">
    <property type="term" value="F:metal ion binding"/>
    <property type="evidence" value="ECO:0007669"/>
    <property type="project" value="UniProtKB-KW"/>
</dbReference>
<dbReference type="GO" id="GO:0019872">
    <property type="term" value="P:streptomycin biosynthetic process"/>
    <property type="evidence" value="ECO:0007669"/>
    <property type="project" value="UniProtKB-UniPathway"/>
</dbReference>
<dbReference type="CDD" id="cd04189">
    <property type="entry name" value="G1P_TT_long"/>
    <property type="match status" value="1"/>
</dbReference>
<dbReference type="Gene3D" id="2.160.10.10">
    <property type="entry name" value="Hexapeptide repeat proteins"/>
    <property type="match status" value="1"/>
</dbReference>
<dbReference type="Gene3D" id="3.90.550.10">
    <property type="entry name" value="Spore Coat Polysaccharide Biosynthesis Protein SpsA, Chain A"/>
    <property type="match status" value="1"/>
</dbReference>
<dbReference type="InterPro" id="IPR005908">
    <property type="entry name" value="G1P_thy_trans_l"/>
</dbReference>
<dbReference type="InterPro" id="IPR005835">
    <property type="entry name" value="NTP_transferase_dom"/>
</dbReference>
<dbReference type="InterPro" id="IPR029044">
    <property type="entry name" value="Nucleotide-diphossugar_trans"/>
</dbReference>
<dbReference type="NCBIfam" id="TIGR01208">
    <property type="entry name" value="rmlA_long"/>
    <property type="match status" value="1"/>
</dbReference>
<dbReference type="PANTHER" id="PTHR42883">
    <property type="entry name" value="GLUCOSE-1-PHOSPHATE THYMIDYLTRANSFERASE"/>
    <property type="match status" value="1"/>
</dbReference>
<dbReference type="PANTHER" id="PTHR42883:SF2">
    <property type="entry name" value="THYMIDYLYLTRANSFERASE"/>
    <property type="match status" value="1"/>
</dbReference>
<dbReference type="Pfam" id="PF00483">
    <property type="entry name" value="NTP_transferase"/>
    <property type="match status" value="1"/>
</dbReference>
<dbReference type="SUPFAM" id="SSF53448">
    <property type="entry name" value="Nucleotide-diphospho-sugar transferases"/>
    <property type="match status" value="1"/>
</dbReference>
<accession>P08075</accession>
<reference key="1">
    <citation type="journal article" date="1987" name="Nucleic Acids Res.">
        <title>Gene cluster for streptomycin biosynthesis in Streptomyces griseus: nucleotide sequence of three genes and analysis of transcriptional activity.</title>
        <authorList>
            <person name="Distler J."/>
            <person name="Ebert A."/>
            <person name="Mansouri K."/>
            <person name="Pissowotzki K."/>
            <person name="Stockmann M."/>
            <person name="Piepersberg W."/>
        </authorList>
    </citation>
    <scope>NUCLEOTIDE SEQUENCE [GENOMIC DNA]</scope>
    <source>
        <strain>N2-3-11</strain>
    </source>
</reference>